<organism>
    <name type="scientific">Eremothecium gossypii (strain ATCC 10895 / CBS 109.51 / FGSC 9923 / NRRL Y-1056)</name>
    <name type="common">Yeast</name>
    <name type="synonym">Ashbya gossypii</name>
    <dbReference type="NCBI Taxonomy" id="284811"/>
    <lineage>
        <taxon>Eukaryota</taxon>
        <taxon>Fungi</taxon>
        <taxon>Dikarya</taxon>
        <taxon>Ascomycota</taxon>
        <taxon>Saccharomycotina</taxon>
        <taxon>Saccharomycetes</taxon>
        <taxon>Saccharomycetales</taxon>
        <taxon>Saccharomycetaceae</taxon>
        <taxon>Eremothecium</taxon>
    </lineage>
</organism>
<proteinExistence type="inferred from homology"/>
<sequence>MGDGSDAERSGGTSSSSALELLAQYEQHIMERGRTLEAIEGHGGERLGPTYEELVEENVQLRRELQGQREEIEHLRKTISLLASGRSGATVVEQQVRPEPSPSVRELALPPRSADRRKNTKNLSLAPVGHEVPSTDRLRVSPQEATSGAQQVPLLTSSKSAEILVSKSPDEDRHLMSPRKTISRSSSSYSNTLGSPATSVLYKNSRISITSPCKSNSTSKAASVLSLPENNTSTENAPHSPHRIDNELDLLTVEPQDGSRYDTERAGGPGPLSPESIVYSDSDLQEHQPSDLSSTTRTDLGKFRDMVDTTFNAEDNPTGSRDKETGTEMEIATLQNTPSRQHESSLVTSPQASRSSITTPVVDPTNTSEPSSLSAAKFGSMSTATSSNKRSKGMGTPSVEHSAKSYSQHSGSPHSNSHQSKKADIPLFVQPEELGTIRIEVISTLYHEPGNAASILFSVVDKKSSKEMFKFAKTFTRIAEFDTFIRNNMESLAVPPLPDKHMFASNVPVKVDSRREKLNDYFASLLYLSPLPFNPALKLAQFISTDPVMNPITGEFAKEGMLLVRKSKTLGSTTTWRIRYCTVEGSIMHLHDHMIDTDTIKLTHSTIELQANLPDDKYGTKNGFILNEHKKSGLSSSTKYYFCAETPKEREQWISVLTTLCDGPGGTAAIPSINSKSEASSLFEQTSISDSSYLGPIANLEAMDATSPTRPNDPNPVSLTSEEEKEVKRRRMKSFFPFKKLATTPTPYAAGNDNASIFSQDDDSPVNATNESGISRSLQSMNLQAQYNAVFGADLRSCLQLSSHPYQGKYEIPSVVFRTLEFLYKNRGIQEEGIFRLSGSSSLIKSLQEQFDKEYDVDLCNYNDKVSVTPGNENQGGLYVDVNTVSGLLKLYLRKLPHMIFGDAAYMDFKRIVERNGDDSKLIALEFRALVNSGRIAKEYVALMYALFELLVKITENSKYNKMNLRNLCIVFSPTLNIPVNILHPFITDFGCIFQDKAPMENGPPVNIHIPQI</sequence>
<dbReference type="EMBL" id="AF210624">
    <property type="protein sequence ID" value="AAG41239.1"/>
    <property type="molecule type" value="Genomic_DNA"/>
</dbReference>
<dbReference type="EMBL" id="AE016820">
    <property type="protein sequence ID" value="AAS54720.2"/>
    <property type="molecule type" value="Genomic_DNA"/>
</dbReference>
<dbReference type="RefSeq" id="NP_986896.2">
    <property type="nucleotide sequence ID" value="NM_211958.2"/>
</dbReference>
<dbReference type="SMR" id="Q74ZH7"/>
<dbReference type="FunCoup" id="Q74ZH7">
    <property type="interactions" value="226"/>
</dbReference>
<dbReference type="STRING" id="284811.Q74ZH7"/>
<dbReference type="EnsemblFungi" id="AAS54720">
    <property type="protein sequence ID" value="AAS54720"/>
    <property type="gene ID" value="AGOS_AGR230W"/>
</dbReference>
<dbReference type="GeneID" id="4623198"/>
<dbReference type="KEGG" id="ago:AGOS_AGR230W"/>
<dbReference type="eggNOG" id="KOG4269">
    <property type="taxonomic scope" value="Eukaryota"/>
</dbReference>
<dbReference type="HOGENOM" id="CLU_010436_0_0_1"/>
<dbReference type="InParanoid" id="Q74ZH7"/>
<dbReference type="OMA" id="QFISTDT"/>
<dbReference type="OrthoDB" id="185175at2759"/>
<dbReference type="Proteomes" id="UP000000591">
    <property type="component" value="Chromosome VII"/>
</dbReference>
<dbReference type="GO" id="GO:0005938">
    <property type="term" value="C:cell cortex"/>
    <property type="evidence" value="ECO:0000318"/>
    <property type="project" value="GO_Central"/>
</dbReference>
<dbReference type="GO" id="GO:0051286">
    <property type="term" value="C:cell tip"/>
    <property type="evidence" value="ECO:0000318"/>
    <property type="project" value="GO_Central"/>
</dbReference>
<dbReference type="GO" id="GO:0005934">
    <property type="term" value="C:cellular bud tip"/>
    <property type="evidence" value="ECO:0007669"/>
    <property type="project" value="EnsemblFungi"/>
</dbReference>
<dbReference type="GO" id="GO:0000131">
    <property type="term" value="C:incipient cellular bud site"/>
    <property type="evidence" value="ECO:0007669"/>
    <property type="project" value="EnsemblFungi"/>
</dbReference>
<dbReference type="GO" id="GO:0043332">
    <property type="term" value="C:mating projection tip"/>
    <property type="evidence" value="ECO:0007669"/>
    <property type="project" value="EnsemblFungi"/>
</dbReference>
<dbReference type="GO" id="GO:0005886">
    <property type="term" value="C:plasma membrane"/>
    <property type="evidence" value="ECO:0000318"/>
    <property type="project" value="GO_Central"/>
</dbReference>
<dbReference type="GO" id="GO:0030427">
    <property type="term" value="C:site of polarized growth"/>
    <property type="evidence" value="ECO:0000318"/>
    <property type="project" value="GO_Central"/>
</dbReference>
<dbReference type="GO" id="GO:0005096">
    <property type="term" value="F:GTPase activator activity"/>
    <property type="evidence" value="ECO:0000318"/>
    <property type="project" value="GO_Central"/>
</dbReference>
<dbReference type="GO" id="GO:0032266">
    <property type="term" value="F:phosphatidylinositol-3-phosphate binding"/>
    <property type="evidence" value="ECO:0007669"/>
    <property type="project" value="EnsemblFungi"/>
</dbReference>
<dbReference type="GO" id="GO:0030010">
    <property type="term" value="P:establishment of cell polarity"/>
    <property type="evidence" value="ECO:0007669"/>
    <property type="project" value="EnsemblFungi"/>
</dbReference>
<dbReference type="GO" id="GO:0035024">
    <property type="term" value="P:negative regulation of Rho protein signal transduction"/>
    <property type="evidence" value="ECO:0007669"/>
    <property type="project" value="EnsemblFungi"/>
</dbReference>
<dbReference type="GO" id="GO:0031106">
    <property type="term" value="P:septin ring organization"/>
    <property type="evidence" value="ECO:0007669"/>
    <property type="project" value="EnsemblFungi"/>
</dbReference>
<dbReference type="GO" id="GO:0007264">
    <property type="term" value="P:small GTPase-mediated signal transduction"/>
    <property type="evidence" value="ECO:0000318"/>
    <property type="project" value="GO_Central"/>
</dbReference>
<dbReference type="CDD" id="cd13277">
    <property type="entry name" value="PH_Bem3"/>
    <property type="match status" value="1"/>
</dbReference>
<dbReference type="CDD" id="cd06093">
    <property type="entry name" value="PX_domain"/>
    <property type="match status" value="1"/>
</dbReference>
<dbReference type="Gene3D" id="3.30.1520.10">
    <property type="entry name" value="Phox-like domain"/>
    <property type="match status" value="1"/>
</dbReference>
<dbReference type="Gene3D" id="2.30.29.30">
    <property type="entry name" value="Pleckstrin-homology domain (PH domain)/Phosphotyrosine-binding domain (PTB)"/>
    <property type="match status" value="1"/>
</dbReference>
<dbReference type="Gene3D" id="1.10.555.10">
    <property type="entry name" value="Rho GTPase activation protein"/>
    <property type="match status" value="1"/>
</dbReference>
<dbReference type="InterPro" id="IPR011993">
    <property type="entry name" value="PH-like_dom_sf"/>
</dbReference>
<dbReference type="InterPro" id="IPR001849">
    <property type="entry name" value="PH_domain"/>
</dbReference>
<dbReference type="InterPro" id="IPR001683">
    <property type="entry name" value="PX_dom"/>
</dbReference>
<dbReference type="InterPro" id="IPR036871">
    <property type="entry name" value="PX_dom_sf"/>
</dbReference>
<dbReference type="InterPro" id="IPR050729">
    <property type="entry name" value="Rho-GAP"/>
</dbReference>
<dbReference type="InterPro" id="IPR008936">
    <property type="entry name" value="Rho_GTPase_activation_prot"/>
</dbReference>
<dbReference type="InterPro" id="IPR000198">
    <property type="entry name" value="RhoGAP_dom"/>
</dbReference>
<dbReference type="PANTHER" id="PTHR23176:SF129">
    <property type="entry name" value="RHO GTPASE ACTIVATING PROTEIN AT 16F, ISOFORM E-RELATED"/>
    <property type="match status" value="1"/>
</dbReference>
<dbReference type="PANTHER" id="PTHR23176">
    <property type="entry name" value="RHO/RAC/CDC GTPASE-ACTIVATING PROTEIN"/>
    <property type="match status" value="1"/>
</dbReference>
<dbReference type="Pfam" id="PF00169">
    <property type="entry name" value="PH"/>
    <property type="match status" value="1"/>
</dbReference>
<dbReference type="Pfam" id="PF00787">
    <property type="entry name" value="PX"/>
    <property type="match status" value="1"/>
</dbReference>
<dbReference type="Pfam" id="PF00620">
    <property type="entry name" value="RhoGAP"/>
    <property type="match status" value="1"/>
</dbReference>
<dbReference type="SMART" id="SM00233">
    <property type="entry name" value="PH"/>
    <property type="match status" value="1"/>
</dbReference>
<dbReference type="SMART" id="SM00324">
    <property type="entry name" value="RhoGAP"/>
    <property type="match status" value="1"/>
</dbReference>
<dbReference type="SUPFAM" id="SSF48350">
    <property type="entry name" value="GTPase activation domain, GAP"/>
    <property type="match status" value="1"/>
</dbReference>
<dbReference type="SUPFAM" id="SSF50729">
    <property type="entry name" value="PH domain-like"/>
    <property type="match status" value="1"/>
</dbReference>
<dbReference type="SUPFAM" id="SSF64268">
    <property type="entry name" value="PX domain"/>
    <property type="match status" value="1"/>
</dbReference>
<dbReference type="PROSITE" id="PS50003">
    <property type="entry name" value="PH_DOMAIN"/>
    <property type="match status" value="1"/>
</dbReference>
<dbReference type="PROSITE" id="PS50238">
    <property type="entry name" value="RHOGAP"/>
    <property type="match status" value="1"/>
</dbReference>
<protein>
    <recommendedName>
        <fullName>GTPase-activating protein BEM3</fullName>
    </recommendedName>
</protein>
<evidence type="ECO:0000250" key="1"/>
<evidence type="ECO:0000255" key="2">
    <source>
        <dbReference type="PROSITE-ProRule" id="PRU00145"/>
    </source>
</evidence>
<evidence type="ECO:0000255" key="3">
    <source>
        <dbReference type="PROSITE-ProRule" id="PRU00172"/>
    </source>
</evidence>
<evidence type="ECO:0000256" key="4">
    <source>
        <dbReference type="SAM" id="MobiDB-lite"/>
    </source>
</evidence>
<accession>Q74ZH7</accession>
<accession>Q9HF64</accession>
<keyword id="KW-0963">Cytoplasm</keyword>
<keyword id="KW-0343">GTPase activation</keyword>
<keyword id="KW-1185">Reference proteome</keyword>
<gene>
    <name type="primary">BEM3</name>
    <name type="ordered locus">AGR230W</name>
</gene>
<comment type="function">
    <text evidence="1">GTPase-activating protein (GAP) for CDC42 and less efficiently for RHO1. Negative regulator of the pheromone-response pathway through the STE20 protein kinase (By similarity).</text>
</comment>
<comment type="subcellular location">
    <subcellularLocation>
        <location evidence="1">Cytoplasm</location>
    </subcellularLocation>
</comment>
<reference key="1">
    <citation type="submission" date="1999-12" db="EMBL/GenBank/DDBJ databases">
        <title>Isolation and characterization of the Ashbya gossypii BEM3 homolog.</title>
        <authorList>
            <person name="Wendland J."/>
            <person name="Philippsen P."/>
        </authorList>
    </citation>
    <scope>NUCLEOTIDE SEQUENCE [GENOMIC DNA]</scope>
</reference>
<reference key="2">
    <citation type="journal article" date="2004" name="Science">
        <title>The Ashbya gossypii genome as a tool for mapping the ancient Saccharomyces cerevisiae genome.</title>
        <authorList>
            <person name="Dietrich F.S."/>
            <person name="Voegeli S."/>
            <person name="Brachat S."/>
            <person name="Lerch A."/>
            <person name="Gates K."/>
            <person name="Steiner S."/>
            <person name="Mohr C."/>
            <person name="Poehlmann R."/>
            <person name="Luedi P."/>
            <person name="Choi S."/>
            <person name="Wing R.A."/>
            <person name="Flavier A."/>
            <person name="Gaffney T.D."/>
            <person name="Philippsen P."/>
        </authorList>
    </citation>
    <scope>NUCLEOTIDE SEQUENCE [LARGE SCALE GENOMIC DNA]</scope>
    <source>
        <strain>ATCC 10895 / CBS 109.51 / FGSC 9923 / NRRL Y-1056</strain>
    </source>
</reference>
<reference key="3">
    <citation type="journal article" date="2013" name="G3 (Bethesda)">
        <title>Genomes of Ashbya fungi isolated from insects reveal four mating-type loci, numerous translocations, lack of transposons, and distinct gene duplications.</title>
        <authorList>
            <person name="Dietrich F.S."/>
            <person name="Voegeli S."/>
            <person name="Kuo S."/>
            <person name="Philippsen P."/>
        </authorList>
    </citation>
    <scope>GENOME REANNOTATION</scope>
    <scope>SEQUENCE REVISION TO 61</scope>
    <source>
        <strain>ATCC 10895 / CBS 109.51 / FGSC 9923 / NRRL Y-1056</strain>
    </source>
</reference>
<feature type="chain" id="PRO_0000056727" description="GTPase-activating protein BEM3">
    <location>
        <begin position="1"/>
        <end position="1013"/>
    </location>
</feature>
<feature type="domain" description="PH" evidence="2">
    <location>
        <begin position="555"/>
        <end position="662"/>
    </location>
</feature>
<feature type="domain" description="Rho-GAP" evidence="3">
    <location>
        <begin position="799"/>
        <end position="1013"/>
    </location>
</feature>
<feature type="region of interest" description="Disordered" evidence="4">
    <location>
        <begin position="90"/>
        <end position="197"/>
    </location>
</feature>
<feature type="region of interest" description="Disordered" evidence="4">
    <location>
        <begin position="258"/>
        <end position="277"/>
    </location>
</feature>
<feature type="region of interest" description="Disordered" evidence="4">
    <location>
        <begin position="282"/>
        <end position="301"/>
    </location>
</feature>
<feature type="region of interest" description="Disordered" evidence="4">
    <location>
        <begin position="307"/>
        <end position="421"/>
    </location>
</feature>
<feature type="region of interest" description="Disordered" evidence="4">
    <location>
        <begin position="702"/>
        <end position="726"/>
    </location>
</feature>
<feature type="compositionally biased region" description="Polar residues" evidence="4">
    <location>
        <begin position="143"/>
        <end position="160"/>
    </location>
</feature>
<feature type="compositionally biased region" description="Polar residues" evidence="4">
    <location>
        <begin position="309"/>
        <end position="319"/>
    </location>
</feature>
<feature type="compositionally biased region" description="Polar residues" evidence="4">
    <location>
        <begin position="333"/>
        <end position="388"/>
    </location>
</feature>
<feature type="compositionally biased region" description="Polar residues" evidence="4">
    <location>
        <begin position="404"/>
        <end position="418"/>
    </location>
</feature>
<feature type="compositionally biased region" description="Polar residues" evidence="4">
    <location>
        <begin position="706"/>
        <end position="720"/>
    </location>
</feature>
<feature type="site" description="Arginine finger; crucial for GTP hydrolysis by stabilizing the transition state" evidence="3">
    <location>
        <position position="836"/>
    </location>
</feature>
<name>BEM3_EREGS</name>